<dbReference type="EC" id="1.-.-.-" evidence="7"/>
<dbReference type="EMBL" id="BK010672">
    <property type="protein sequence ID" value="DAC76723.1"/>
    <property type="molecule type" value="Genomic_DNA"/>
</dbReference>
<dbReference type="GO" id="GO:0020037">
    <property type="term" value="F:heme binding"/>
    <property type="evidence" value="ECO:0007669"/>
    <property type="project" value="InterPro"/>
</dbReference>
<dbReference type="GO" id="GO:0005506">
    <property type="term" value="F:iron ion binding"/>
    <property type="evidence" value="ECO:0007669"/>
    <property type="project" value="InterPro"/>
</dbReference>
<dbReference type="GO" id="GO:0004497">
    <property type="term" value="F:monooxygenase activity"/>
    <property type="evidence" value="ECO:0007669"/>
    <property type="project" value="UniProtKB-KW"/>
</dbReference>
<dbReference type="GO" id="GO:0016705">
    <property type="term" value="F:oxidoreductase activity, acting on paired donors, with incorporation or reduction of molecular oxygen"/>
    <property type="evidence" value="ECO:0007669"/>
    <property type="project" value="InterPro"/>
</dbReference>
<dbReference type="Gene3D" id="1.10.630.10">
    <property type="entry name" value="Cytochrome P450"/>
    <property type="match status" value="1"/>
</dbReference>
<dbReference type="InterPro" id="IPR001128">
    <property type="entry name" value="Cyt_P450"/>
</dbReference>
<dbReference type="InterPro" id="IPR002403">
    <property type="entry name" value="Cyt_P450_E_grp-IV"/>
</dbReference>
<dbReference type="InterPro" id="IPR036396">
    <property type="entry name" value="Cyt_P450_sf"/>
</dbReference>
<dbReference type="InterPro" id="IPR050121">
    <property type="entry name" value="Cytochrome_P450_monoxygenase"/>
</dbReference>
<dbReference type="PANTHER" id="PTHR24305">
    <property type="entry name" value="CYTOCHROME P450"/>
    <property type="match status" value="1"/>
</dbReference>
<dbReference type="PANTHER" id="PTHR24305:SF166">
    <property type="entry name" value="CYTOCHROME P450 12A4, MITOCHONDRIAL-RELATED"/>
    <property type="match status" value="1"/>
</dbReference>
<dbReference type="Pfam" id="PF00067">
    <property type="entry name" value="p450"/>
    <property type="match status" value="1"/>
</dbReference>
<dbReference type="PRINTS" id="PR00465">
    <property type="entry name" value="EP450IV"/>
</dbReference>
<dbReference type="SUPFAM" id="SSF48264">
    <property type="entry name" value="Cytochrome P450"/>
    <property type="match status" value="1"/>
</dbReference>
<reference key="1">
    <citation type="journal article" date="2019" name="Environ. Microbiol.">
        <title>Orthologous peramine and pyrrolopyrazine-producing biosynthetic gene clusters in Metarhizium rileyi, Metarhizium majus and Cladonia grayi.</title>
        <authorList>
            <person name="Berry D."/>
            <person name="Mace W."/>
            <person name="Rehner S.A."/>
            <person name="Grage K."/>
            <person name="Dijkwel P.P."/>
            <person name="Young C.A."/>
            <person name="Scott B."/>
        </authorList>
    </citation>
    <scope>NUCLEOTIDE SEQUENCE [GENOMIC DNA]</scope>
    <scope>FUNCTION</scope>
    <scope>PATHWAY</scope>
    <source>
        <strain>ARSEF 297</strain>
    </source>
</reference>
<reference key="2">
    <citation type="journal article" date="2024" name="J. Am. Chem. Soc.">
        <title>Two Iron(II), alpha-Ketoglutarate-Dependent Enzymes Encoded by the PPZ Gene Cluster of Metarhizium majus Enable Production of 8-Hydroxyperamine.</title>
        <authorList>
            <person name="Rothchild K.W."/>
            <person name="Hagar M."/>
            <person name="Berry D."/>
            <person name="Ryan K.S."/>
        </authorList>
    </citation>
    <scope>FUNCTION</scope>
    <scope>PATHWAY</scope>
</reference>
<accession>A0A455ZM03</accession>
<gene>
    <name type="primary">ppzG</name>
</gene>
<proteinExistence type="inferred from homology"/>
<evidence type="ECO:0000250" key="1">
    <source>
        <dbReference type="UniProtKB" id="P04798"/>
    </source>
</evidence>
<evidence type="ECO:0000250" key="2">
    <source>
        <dbReference type="UniProtKB" id="Q4H424"/>
    </source>
</evidence>
<evidence type="ECO:0000269" key="3">
    <source>
    </source>
</evidence>
<evidence type="ECO:0000269" key="4">
    <source>
    </source>
</evidence>
<evidence type="ECO:0000303" key="5">
    <source>
    </source>
</evidence>
<evidence type="ECO:0000305" key="6"/>
<evidence type="ECO:0000305" key="7">
    <source>
    </source>
</evidence>
<evidence type="ECO:0000312" key="8">
    <source>
        <dbReference type="EMBL" id="DAC76723.1"/>
    </source>
</evidence>
<comment type="function">
    <text evidence="2 3 4">Cytochrome P450 monooxygenase; part of the gene cluster that mediates the biosynthesis of pyrrolopyrazines, secondary metabolites showing insecticidal activity (PubMed:30452111, PubMed:38578094). The role of ppzG within the pathway has still to be determined (PubMed:38578094). The single multifunctional NRPS ppzA is sufficient to produce peramine via condensation of 1-pyrroline-5-carboxylate and arginine, N-methylation of the alpha-amino group of arginine and reduction of the thioester and the cyclization to form an iminium ion resulting in release from the peptide synthetase. Deprotonation of this intermediate and oxidation of the pyrroline ring would give rise to peramine (By similarity). In Epichloe species that produce only peramine, the peramine synthetase gene is not localized in a gene cluster, in contrast to Metarhizium species that contain additional pyrrolopyrazine biosynthesis genes. The 2-oxoglutarate-Fe(II) type oxidoreductase ppzC hydroxylates peramine to yield the newly identified compound 8-hydroxyperamine whereas ppzD converts L-proline into trans-4-hydroxy-L-proline, a precursor of peramine biosynthesis (PubMed:38578094).</text>
</comment>
<comment type="cofactor">
    <cofactor evidence="1">
        <name>heme</name>
        <dbReference type="ChEBI" id="CHEBI:30413"/>
    </cofactor>
</comment>
<comment type="pathway">
    <text evidence="7">Secondary metabolite biosynthesis.</text>
</comment>
<comment type="similarity">
    <text evidence="6">Belongs to the cytochrome P450 family.</text>
</comment>
<protein>
    <recommendedName>
        <fullName evidence="5">Cytochrome P450 monooxygenase ppzG</fullName>
        <ecNumber evidence="7">1.-.-.-</ecNumber>
    </recommendedName>
    <alternativeName>
        <fullName evidence="5">Pyrrolopyrazine biosynthesis cluster protein G</fullName>
    </alternativeName>
</protein>
<name>PPZG_METMF</name>
<feature type="chain" id="PRO_0000461615" description="Cytochrome P450 monooxygenase ppzG">
    <location>
        <begin position="1"/>
        <end position="310"/>
    </location>
</feature>
<feature type="binding site" description="axial binding residue" evidence="1">
    <location>
        <position position="288"/>
    </location>
    <ligand>
        <name>heme</name>
        <dbReference type="ChEBI" id="CHEBI:30413"/>
    </ligand>
    <ligandPart>
        <name>Fe</name>
        <dbReference type="ChEBI" id="CHEBI:18248"/>
    </ligandPart>
</feature>
<sequence>MNDFVFSDIPDILKPMASVEFDDPLTKATGDVLNWTLWLIRNFPALSNIIMRLPSSLVSIVTSSFEGANQMFQVTTSTHNLYSASLPTHATKQIISKLVEHEKTHIGPKNKDCVVQRLLNAHRDSESKISIPTPDATVRSEAIGFTLAGTADPPNILALGTFMAARDPEMQEGLYKELRAVWPDLRSPVPSYNLLHQLPLLRGVVKESIRFTHGVATGPARLVGAGGARIGGYNVPAKASLAVVAAPSYFVHMDETVFSEPEKFEPRRWADNDYSKSLVAFSRGRRMCPAEQFHVEPYETTSVPRSEERG</sequence>
<organism evidence="8">
    <name type="scientific">Metarhizium majus (strain ARSEF 297)</name>
    <dbReference type="NCBI Taxonomy" id="1276143"/>
    <lineage>
        <taxon>Eukaryota</taxon>
        <taxon>Fungi</taxon>
        <taxon>Dikarya</taxon>
        <taxon>Ascomycota</taxon>
        <taxon>Pezizomycotina</taxon>
        <taxon>Sordariomycetes</taxon>
        <taxon>Hypocreomycetidae</taxon>
        <taxon>Hypocreales</taxon>
        <taxon>Clavicipitaceae</taxon>
        <taxon>Metarhizium</taxon>
        <taxon>Metarhizium majus</taxon>
    </lineage>
</organism>
<keyword id="KW-0349">Heme</keyword>
<keyword id="KW-0408">Iron</keyword>
<keyword id="KW-0479">Metal-binding</keyword>
<keyword id="KW-0503">Monooxygenase</keyword>
<keyword id="KW-0560">Oxidoreductase</keyword>